<sequence>MRVDLFDFELPSENIALRPARPRDSARLLGVGRDGPFRDLIVRDLPDLLNPGDVLVFNDTRVIPAQLEGQRGEARVGATLHKRIDLRRWQAFVRNAKRLREGDVIQFGAGVTATAEMRLPDGSWTLFFPGEEPVEVLLERAGRMPLPPYIAGKRPTDEQDREDYQTMFAAKDGAVAAPTAALHFTPSLMEALAARGVATETLTLHVGAGTFLPVKADDTQDHQMHAEWGTIDAATADRLNAARAAGKRVIAVGTTSLRLLESATGEDRVIRPFEGDTSIFITPGYTFRAIDGLMTNFHLPKSTLFMLVSALMGLDRMQAAYAHAIAGGYRFYSYGDSSLLLP</sequence>
<protein>
    <recommendedName>
        <fullName evidence="1">S-adenosylmethionine:tRNA ribosyltransferase-isomerase</fullName>
        <ecNumber evidence="1">2.4.99.17</ecNumber>
    </recommendedName>
    <alternativeName>
        <fullName evidence="1">Queuosine biosynthesis protein QueA</fullName>
    </alternativeName>
</protein>
<dbReference type="EC" id="2.4.99.17" evidence="1"/>
<dbReference type="EMBL" id="CP000248">
    <property type="protein sequence ID" value="ABD26687.1"/>
    <property type="molecule type" value="Genomic_DNA"/>
</dbReference>
<dbReference type="RefSeq" id="WP_011445893.1">
    <property type="nucleotide sequence ID" value="NC_007794.1"/>
</dbReference>
<dbReference type="SMR" id="Q2G636"/>
<dbReference type="STRING" id="279238.Saro_2250"/>
<dbReference type="KEGG" id="nar:Saro_2250"/>
<dbReference type="eggNOG" id="COG0809">
    <property type="taxonomic scope" value="Bacteria"/>
</dbReference>
<dbReference type="HOGENOM" id="CLU_039110_1_1_5"/>
<dbReference type="UniPathway" id="UPA00392"/>
<dbReference type="Proteomes" id="UP000009134">
    <property type="component" value="Chromosome"/>
</dbReference>
<dbReference type="GO" id="GO:0005737">
    <property type="term" value="C:cytoplasm"/>
    <property type="evidence" value="ECO:0007669"/>
    <property type="project" value="UniProtKB-SubCell"/>
</dbReference>
<dbReference type="GO" id="GO:0051075">
    <property type="term" value="F:S-adenosylmethionine:tRNA ribosyltransferase-isomerase activity"/>
    <property type="evidence" value="ECO:0007669"/>
    <property type="project" value="UniProtKB-EC"/>
</dbReference>
<dbReference type="GO" id="GO:0008616">
    <property type="term" value="P:queuosine biosynthetic process"/>
    <property type="evidence" value="ECO:0007669"/>
    <property type="project" value="UniProtKB-UniRule"/>
</dbReference>
<dbReference type="GO" id="GO:0002099">
    <property type="term" value="P:tRNA wobble guanine modification"/>
    <property type="evidence" value="ECO:0007669"/>
    <property type="project" value="TreeGrafter"/>
</dbReference>
<dbReference type="FunFam" id="3.40.1780.10:FF:000001">
    <property type="entry name" value="S-adenosylmethionine:tRNA ribosyltransferase-isomerase"/>
    <property type="match status" value="1"/>
</dbReference>
<dbReference type="Gene3D" id="2.40.10.240">
    <property type="entry name" value="QueA-like"/>
    <property type="match status" value="1"/>
</dbReference>
<dbReference type="Gene3D" id="3.40.1780.10">
    <property type="entry name" value="QueA-like"/>
    <property type="match status" value="1"/>
</dbReference>
<dbReference type="HAMAP" id="MF_00113">
    <property type="entry name" value="QueA"/>
    <property type="match status" value="1"/>
</dbReference>
<dbReference type="InterPro" id="IPR003699">
    <property type="entry name" value="QueA"/>
</dbReference>
<dbReference type="InterPro" id="IPR042118">
    <property type="entry name" value="QueA_dom1"/>
</dbReference>
<dbReference type="InterPro" id="IPR042119">
    <property type="entry name" value="QueA_dom2"/>
</dbReference>
<dbReference type="InterPro" id="IPR036100">
    <property type="entry name" value="QueA_sf"/>
</dbReference>
<dbReference type="NCBIfam" id="NF001140">
    <property type="entry name" value="PRK00147.1"/>
    <property type="match status" value="1"/>
</dbReference>
<dbReference type="NCBIfam" id="TIGR00113">
    <property type="entry name" value="queA"/>
    <property type="match status" value="1"/>
</dbReference>
<dbReference type="PANTHER" id="PTHR30307">
    <property type="entry name" value="S-ADENOSYLMETHIONINE:TRNA RIBOSYLTRANSFERASE-ISOMERASE"/>
    <property type="match status" value="1"/>
</dbReference>
<dbReference type="PANTHER" id="PTHR30307:SF0">
    <property type="entry name" value="S-ADENOSYLMETHIONINE:TRNA RIBOSYLTRANSFERASE-ISOMERASE"/>
    <property type="match status" value="1"/>
</dbReference>
<dbReference type="Pfam" id="PF02547">
    <property type="entry name" value="Queuosine_synth"/>
    <property type="match status" value="1"/>
</dbReference>
<dbReference type="SUPFAM" id="SSF111337">
    <property type="entry name" value="QueA-like"/>
    <property type="match status" value="1"/>
</dbReference>
<evidence type="ECO:0000255" key="1">
    <source>
        <dbReference type="HAMAP-Rule" id="MF_00113"/>
    </source>
</evidence>
<feature type="chain" id="PRO_1000015239" description="S-adenosylmethionine:tRNA ribosyltransferase-isomerase">
    <location>
        <begin position="1"/>
        <end position="342"/>
    </location>
</feature>
<organism>
    <name type="scientific">Novosphingobium aromaticivorans (strain ATCC 700278 / DSM 12444 / CCUG 56034 / CIP 105152 / NBRC 16084 / F199)</name>
    <dbReference type="NCBI Taxonomy" id="279238"/>
    <lineage>
        <taxon>Bacteria</taxon>
        <taxon>Pseudomonadati</taxon>
        <taxon>Pseudomonadota</taxon>
        <taxon>Alphaproteobacteria</taxon>
        <taxon>Sphingomonadales</taxon>
        <taxon>Sphingomonadaceae</taxon>
        <taxon>Novosphingobium</taxon>
    </lineage>
</organism>
<reference key="1">
    <citation type="submission" date="2006-01" db="EMBL/GenBank/DDBJ databases">
        <title>Complete sequence of Novosphingobium aromaticivorans DSM 12444.</title>
        <authorList>
            <consortium name="US DOE Joint Genome Institute"/>
            <person name="Copeland A."/>
            <person name="Lucas S."/>
            <person name="Lapidus A."/>
            <person name="Barry K."/>
            <person name="Detter J.C."/>
            <person name="Glavina T."/>
            <person name="Hammon N."/>
            <person name="Israni S."/>
            <person name="Pitluck S."/>
            <person name="Chain P."/>
            <person name="Malfatti S."/>
            <person name="Shin M."/>
            <person name="Vergez L."/>
            <person name="Schmutz J."/>
            <person name="Larimer F."/>
            <person name="Land M."/>
            <person name="Kyrpides N."/>
            <person name="Ivanova N."/>
            <person name="Fredrickson J."/>
            <person name="Balkwill D."/>
            <person name="Romine M.F."/>
            <person name="Richardson P."/>
        </authorList>
    </citation>
    <scope>NUCLEOTIDE SEQUENCE [LARGE SCALE GENOMIC DNA]</scope>
    <source>
        <strain>ATCC 700278 / DSM 12444 / CCUG 56034 / CIP 105152 / NBRC 16084 / F199</strain>
    </source>
</reference>
<keyword id="KW-0963">Cytoplasm</keyword>
<keyword id="KW-0671">Queuosine biosynthesis</keyword>
<keyword id="KW-1185">Reference proteome</keyword>
<keyword id="KW-0949">S-adenosyl-L-methionine</keyword>
<keyword id="KW-0808">Transferase</keyword>
<proteinExistence type="inferred from homology"/>
<name>QUEA_NOVAD</name>
<comment type="function">
    <text evidence="1">Transfers and isomerizes the ribose moiety from AdoMet to the 7-aminomethyl group of 7-deazaguanine (preQ1-tRNA) to give epoxyqueuosine (oQ-tRNA).</text>
</comment>
<comment type="catalytic activity">
    <reaction evidence="1">
        <text>7-aminomethyl-7-carbaguanosine(34) in tRNA + S-adenosyl-L-methionine = epoxyqueuosine(34) in tRNA + adenine + L-methionine + 2 H(+)</text>
        <dbReference type="Rhea" id="RHEA:32155"/>
        <dbReference type="Rhea" id="RHEA-COMP:10342"/>
        <dbReference type="Rhea" id="RHEA-COMP:18582"/>
        <dbReference type="ChEBI" id="CHEBI:15378"/>
        <dbReference type="ChEBI" id="CHEBI:16708"/>
        <dbReference type="ChEBI" id="CHEBI:57844"/>
        <dbReference type="ChEBI" id="CHEBI:59789"/>
        <dbReference type="ChEBI" id="CHEBI:82833"/>
        <dbReference type="ChEBI" id="CHEBI:194443"/>
        <dbReference type="EC" id="2.4.99.17"/>
    </reaction>
</comment>
<comment type="pathway">
    <text evidence="1">tRNA modification; tRNA-queuosine biosynthesis.</text>
</comment>
<comment type="subunit">
    <text evidence="1">Monomer.</text>
</comment>
<comment type="subcellular location">
    <subcellularLocation>
        <location evidence="1">Cytoplasm</location>
    </subcellularLocation>
</comment>
<comment type="similarity">
    <text evidence="1">Belongs to the QueA family.</text>
</comment>
<gene>
    <name evidence="1" type="primary">queA</name>
    <name type="ordered locus">Saro_2250</name>
</gene>
<accession>Q2G636</accession>